<keyword id="KW-0067">ATP-binding</keyword>
<keyword id="KW-0963">Cytoplasm</keyword>
<keyword id="KW-0227">DNA damage</keyword>
<keyword id="KW-0233">DNA recombination</keyword>
<keyword id="KW-0234">DNA repair</keyword>
<keyword id="KW-0238">DNA-binding</keyword>
<keyword id="KW-0378">Hydrolase</keyword>
<keyword id="KW-0547">Nucleotide-binding</keyword>
<evidence type="ECO:0000255" key="1">
    <source>
        <dbReference type="HAMAP-Rule" id="MF_00016"/>
    </source>
</evidence>
<gene>
    <name evidence="1" type="primary">ruvB</name>
    <name type="ordered locus">BTH_I1247</name>
</gene>
<sequence>MIETDKLAAERIIAATPASSHEEAFERALRPRQLDEYVGQEKVRDQLEIFIEAAKRRAEALDHVLLFGPPGLGKTTLAHIIAREMGVNLRQTSGPVLERAGDLAALLTNLEANDVLFIDEIHRLSPVVEEILYPALEDYQIDIMIGEGPAARSVKLDLQPFTLVGATTRAGMLTNPLRDRFGIVARLEFYDAEQLSRIVRRSAALLNAQIDPAGALEIAKRSRGTPRIANRLLRRVRDYAEVKADGNITAAVADAALAMLDVDPVGFDLMDRKLLEAILHKFDGGPVGVDNLAAAIGEERDTIEDVLEPYLIQQGFLQRTPRGRVATLLTYRHFGLATPDAASPVRNLWDTPDAER</sequence>
<feature type="chain" id="PRO_0000235355" description="Holliday junction branch migration complex subunit RuvB">
    <location>
        <begin position="1"/>
        <end position="356"/>
    </location>
</feature>
<feature type="region of interest" description="Large ATPase domain (RuvB-L)" evidence="1">
    <location>
        <begin position="4"/>
        <end position="190"/>
    </location>
</feature>
<feature type="region of interest" description="Small ATPAse domain (RuvB-S)" evidence="1">
    <location>
        <begin position="191"/>
        <end position="261"/>
    </location>
</feature>
<feature type="region of interest" description="Head domain (RuvB-H)" evidence="1">
    <location>
        <begin position="264"/>
        <end position="356"/>
    </location>
</feature>
<feature type="binding site" evidence="1">
    <location>
        <position position="29"/>
    </location>
    <ligand>
        <name>ATP</name>
        <dbReference type="ChEBI" id="CHEBI:30616"/>
    </ligand>
</feature>
<feature type="binding site" evidence="1">
    <location>
        <position position="30"/>
    </location>
    <ligand>
        <name>ATP</name>
        <dbReference type="ChEBI" id="CHEBI:30616"/>
    </ligand>
</feature>
<feature type="binding site" evidence="1">
    <location>
        <position position="71"/>
    </location>
    <ligand>
        <name>ATP</name>
        <dbReference type="ChEBI" id="CHEBI:30616"/>
    </ligand>
</feature>
<feature type="binding site" evidence="1">
    <location>
        <position position="74"/>
    </location>
    <ligand>
        <name>ATP</name>
        <dbReference type="ChEBI" id="CHEBI:30616"/>
    </ligand>
</feature>
<feature type="binding site" evidence="1">
    <location>
        <position position="75"/>
    </location>
    <ligand>
        <name>ATP</name>
        <dbReference type="ChEBI" id="CHEBI:30616"/>
    </ligand>
</feature>
<feature type="binding site" evidence="1">
    <location>
        <position position="75"/>
    </location>
    <ligand>
        <name>Mg(2+)</name>
        <dbReference type="ChEBI" id="CHEBI:18420"/>
    </ligand>
</feature>
<feature type="binding site" evidence="1">
    <location>
        <position position="76"/>
    </location>
    <ligand>
        <name>ATP</name>
        <dbReference type="ChEBI" id="CHEBI:30616"/>
    </ligand>
</feature>
<feature type="binding site" evidence="1">
    <location>
        <begin position="137"/>
        <end position="139"/>
    </location>
    <ligand>
        <name>ATP</name>
        <dbReference type="ChEBI" id="CHEBI:30616"/>
    </ligand>
</feature>
<feature type="binding site" evidence="1">
    <location>
        <position position="180"/>
    </location>
    <ligand>
        <name>ATP</name>
        <dbReference type="ChEBI" id="CHEBI:30616"/>
    </ligand>
</feature>
<feature type="binding site" evidence="1">
    <location>
        <position position="190"/>
    </location>
    <ligand>
        <name>ATP</name>
        <dbReference type="ChEBI" id="CHEBI:30616"/>
    </ligand>
</feature>
<feature type="binding site" evidence="1">
    <location>
        <position position="227"/>
    </location>
    <ligand>
        <name>ATP</name>
        <dbReference type="ChEBI" id="CHEBI:30616"/>
    </ligand>
</feature>
<feature type="binding site" evidence="1">
    <location>
        <position position="300"/>
    </location>
    <ligand>
        <name>DNA</name>
        <dbReference type="ChEBI" id="CHEBI:16991"/>
    </ligand>
</feature>
<feature type="binding site" evidence="1">
    <location>
        <position position="319"/>
    </location>
    <ligand>
        <name>DNA</name>
        <dbReference type="ChEBI" id="CHEBI:16991"/>
    </ligand>
</feature>
<feature type="binding site" evidence="1">
    <location>
        <position position="324"/>
    </location>
    <ligand>
        <name>DNA</name>
        <dbReference type="ChEBI" id="CHEBI:16991"/>
    </ligand>
</feature>
<proteinExistence type="inferred from homology"/>
<organism>
    <name type="scientific">Burkholderia thailandensis (strain ATCC 700388 / DSM 13276 / CCUG 48851 / CIP 106301 / E264)</name>
    <dbReference type="NCBI Taxonomy" id="271848"/>
    <lineage>
        <taxon>Bacteria</taxon>
        <taxon>Pseudomonadati</taxon>
        <taxon>Pseudomonadota</taxon>
        <taxon>Betaproteobacteria</taxon>
        <taxon>Burkholderiales</taxon>
        <taxon>Burkholderiaceae</taxon>
        <taxon>Burkholderia</taxon>
        <taxon>pseudomallei group</taxon>
    </lineage>
</organism>
<protein>
    <recommendedName>
        <fullName evidence="1">Holliday junction branch migration complex subunit RuvB</fullName>
        <ecNumber evidence="1">3.6.4.-</ecNumber>
    </recommendedName>
</protein>
<comment type="function">
    <text evidence="1">The RuvA-RuvB-RuvC complex processes Holliday junction (HJ) DNA during genetic recombination and DNA repair, while the RuvA-RuvB complex plays an important role in the rescue of blocked DNA replication forks via replication fork reversal (RFR). RuvA specifically binds to HJ cruciform DNA, conferring on it an open structure. The RuvB hexamer acts as an ATP-dependent pump, pulling dsDNA into and through the RuvAB complex. RuvB forms 2 homohexamers on either side of HJ DNA bound by 1 or 2 RuvA tetramers; 4 subunits per hexamer contact DNA at a time. Coordinated motions by a converter formed by DNA-disengaged RuvB subunits stimulates ATP hydrolysis and nucleotide exchange. Immobilization of the converter enables RuvB to convert the ATP-contained energy into a lever motion, pulling 2 nucleotides of DNA out of the RuvA tetramer per ATP hydrolyzed, thus driving DNA branch migration. The RuvB motors rotate together with the DNA substrate, which together with the progressing nucleotide cycle form the mechanistic basis for DNA recombination by continuous HJ branch migration. Branch migration allows RuvC to scan DNA until it finds its consensus sequence, where it cleaves and resolves cruciform DNA.</text>
</comment>
<comment type="catalytic activity">
    <reaction evidence="1">
        <text>ATP + H2O = ADP + phosphate + H(+)</text>
        <dbReference type="Rhea" id="RHEA:13065"/>
        <dbReference type="ChEBI" id="CHEBI:15377"/>
        <dbReference type="ChEBI" id="CHEBI:15378"/>
        <dbReference type="ChEBI" id="CHEBI:30616"/>
        <dbReference type="ChEBI" id="CHEBI:43474"/>
        <dbReference type="ChEBI" id="CHEBI:456216"/>
    </reaction>
</comment>
<comment type="subunit">
    <text evidence="1">Homohexamer. Forms an RuvA(8)-RuvB(12)-Holliday junction (HJ) complex. HJ DNA is sandwiched between 2 RuvA tetramers; dsDNA enters through RuvA and exits via RuvB. An RuvB hexamer assembles on each DNA strand where it exits the tetramer. Each RuvB hexamer is contacted by two RuvA subunits (via domain III) on 2 adjacent RuvB subunits; this complex drives branch migration. In the full resolvosome a probable DNA-RuvA(4)-RuvB(12)-RuvC(2) complex forms which resolves the HJ.</text>
</comment>
<comment type="subcellular location">
    <subcellularLocation>
        <location evidence="1">Cytoplasm</location>
    </subcellularLocation>
</comment>
<comment type="domain">
    <text evidence="1">Has 3 domains, the large (RuvB-L) and small ATPase (RuvB-S) domains and the C-terminal head (RuvB-H) domain. The head domain binds DNA, while the ATPase domains jointly bind ATP, ADP or are empty depending on the state of the subunit in the translocation cycle. During a single DNA translocation step the structure of each domain remains the same, but their relative positions change.</text>
</comment>
<comment type="similarity">
    <text evidence="1">Belongs to the RuvB family.</text>
</comment>
<accession>Q2SZ55</accession>
<reference key="1">
    <citation type="journal article" date="2005" name="BMC Genomics">
        <title>Bacterial genome adaptation to niches: divergence of the potential virulence genes in three Burkholderia species of different survival strategies.</title>
        <authorList>
            <person name="Kim H.S."/>
            <person name="Schell M.A."/>
            <person name="Yu Y."/>
            <person name="Ulrich R.L."/>
            <person name="Sarria S.H."/>
            <person name="Nierman W.C."/>
            <person name="DeShazer D."/>
        </authorList>
    </citation>
    <scope>NUCLEOTIDE SEQUENCE [LARGE SCALE GENOMIC DNA]</scope>
    <source>
        <strain>ATCC 700388 / DSM 13276 / CCUG 48851 / CIP 106301 / E264</strain>
    </source>
</reference>
<dbReference type="EC" id="3.6.4.-" evidence="1"/>
<dbReference type="EMBL" id="CP000086">
    <property type="protein sequence ID" value="ABC36557.1"/>
    <property type="molecule type" value="Genomic_DNA"/>
</dbReference>
<dbReference type="RefSeq" id="WP_009889140.1">
    <property type="nucleotide sequence ID" value="NZ_CP008785.1"/>
</dbReference>
<dbReference type="SMR" id="Q2SZ55"/>
<dbReference type="GeneID" id="45120994"/>
<dbReference type="KEGG" id="bte:BTH_I1247"/>
<dbReference type="HOGENOM" id="CLU_055599_1_0_4"/>
<dbReference type="Proteomes" id="UP000001930">
    <property type="component" value="Chromosome I"/>
</dbReference>
<dbReference type="GO" id="GO:0005737">
    <property type="term" value="C:cytoplasm"/>
    <property type="evidence" value="ECO:0007669"/>
    <property type="project" value="UniProtKB-SubCell"/>
</dbReference>
<dbReference type="GO" id="GO:0048476">
    <property type="term" value="C:Holliday junction resolvase complex"/>
    <property type="evidence" value="ECO:0007669"/>
    <property type="project" value="UniProtKB-UniRule"/>
</dbReference>
<dbReference type="GO" id="GO:0005524">
    <property type="term" value="F:ATP binding"/>
    <property type="evidence" value="ECO:0007669"/>
    <property type="project" value="UniProtKB-UniRule"/>
</dbReference>
<dbReference type="GO" id="GO:0016887">
    <property type="term" value="F:ATP hydrolysis activity"/>
    <property type="evidence" value="ECO:0007669"/>
    <property type="project" value="InterPro"/>
</dbReference>
<dbReference type="GO" id="GO:0000400">
    <property type="term" value="F:four-way junction DNA binding"/>
    <property type="evidence" value="ECO:0007669"/>
    <property type="project" value="UniProtKB-UniRule"/>
</dbReference>
<dbReference type="GO" id="GO:0009378">
    <property type="term" value="F:four-way junction helicase activity"/>
    <property type="evidence" value="ECO:0007669"/>
    <property type="project" value="InterPro"/>
</dbReference>
<dbReference type="GO" id="GO:0006310">
    <property type="term" value="P:DNA recombination"/>
    <property type="evidence" value="ECO:0007669"/>
    <property type="project" value="UniProtKB-UniRule"/>
</dbReference>
<dbReference type="GO" id="GO:0006281">
    <property type="term" value="P:DNA repair"/>
    <property type="evidence" value="ECO:0007669"/>
    <property type="project" value="UniProtKB-UniRule"/>
</dbReference>
<dbReference type="CDD" id="cd00009">
    <property type="entry name" value="AAA"/>
    <property type="match status" value="1"/>
</dbReference>
<dbReference type="FunFam" id="1.10.10.10:FF:000086">
    <property type="entry name" value="Holliday junction ATP-dependent DNA helicase RuvB"/>
    <property type="match status" value="1"/>
</dbReference>
<dbReference type="FunFam" id="3.40.50.300:FF:000073">
    <property type="entry name" value="Holliday junction ATP-dependent DNA helicase RuvB"/>
    <property type="match status" value="1"/>
</dbReference>
<dbReference type="Gene3D" id="1.10.8.60">
    <property type="match status" value="1"/>
</dbReference>
<dbReference type="Gene3D" id="3.40.50.300">
    <property type="entry name" value="P-loop containing nucleotide triphosphate hydrolases"/>
    <property type="match status" value="1"/>
</dbReference>
<dbReference type="Gene3D" id="1.10.10.10">
    <property type="entry name" value="Winged helix-like DNA-binding domain superfamily/Winged helix DNA-binding domain"/>
    <property type="match status" value="1"/>
</dbReference>
<dbReference type="HAMAP" id="MF_00016">
    <property type="entry name" value="DNA_HJ_migration_RuvB"/>
    <property type="match status" value="1"/>
</dbReference>
<dbReference type="InterPro" id="IPR003593">
    <property type="entry name" value="AAA+_ATPase"/>
</dbReference>
<dbReference type="InterPro" id="IPR041445">
    <property type="entry name" value="AAA_lid_4"/>
</dbReference>
<dbReference type="InterPro" id="IPR004605">
    <property type="entry name" value="DNA_helicase_Holl-junc_RuvB"/>
</dbReference>
<dbReference type="InterPro" id="IPR027417">
    <property type="entry name" value="P-loop_NTPase"/>
</dbReference>
<dbReference type="InterPro" id="IPR008824">
    <property type="entry name" value="RuvB-like_N"/>
</dbReference>
<dbReference type="InterPro" id="IPR008823">
    <property type="entry name" value="RuvB_C"/>
</dbReference>
<dbReference type="InterPro" id="IPR036388">
    <property type="entry name" value="WH-like_DNA-bd_sf"/>
</dbReference>
<dbReference type="InterPro" id="IPR036390">
    <property type="entry name" value="WH_DNA-bd_sf"/>
</dbReference>
<dbReference type="NCBIfam" id="NF000868">
    <property type="entry name" value="PRK00080.1"/>
    <property type="match status" value="1"/>
</dbReference>
<dbReference type="NCBIfam" id="TIGR00635">
    <property type="entry name" value="ruvB"/>
    <property type="match status" value="1"/>
</dbReference>
<dbReference type="PANTHER" id="PTHR42848">
    <property type="match status" value="1"/>
</dbReference>
<dbReference type="PANTHER" id="PTHR42848:SF1">
    <property type="entry name" value="HOLLIDAY JUNCTION BRANCH MIGRATION COMPLEX SUBUNIT RUVB"/>
    <property type="match status" value="1"/>
</dbReference>
<dbReference type="Pfam" id="PF17864">
    <property type="entry name" value="AAA_lid_4"/>
    <property type="match status" value="1"/>
</dbReference>
<dbReference type="Pfam" id="PF05491">
    <property type="entry name" value="RuvB_C"/>
    <property type="match status" value="1"/>
</dbReference>
<dbReference type="Pfam" id="PF05496">
    <property type="entry name" value="RuvB_N"/>
    <property type="match status" value="1"/>
</dbReference>
<dbReference type="SMART" id="SM00382">
    <property type="entry name" value="AAA"/>
    <property type="match status" value="1"/>
</dbReference>
<dbReference type="SUPFAM" id="SSF52540">
    <property type="entry name" value="P-loop containing nucleoside triphosphate hydrolases"/>
    <property type="match status" value="1"/>
</dbReference>
<dbReference type="SUPFAM" id="SSF46785">
    <property type="entry name" value="Winged helix' DNA-binding domain"/>
    <property type="match status" value="1"/>
</dbReference>
<name>RUVB_BURTA</name>